<comment type="similarity">
    <text evidence="1">Belongs to the UPF0178 family.</text>
</comment>
<sequence>MTHIIIDGDACPVVDSIIDLTTETGIFVTIIRSFSHFSNQLYPPHVSTLYVDDGPDAVDYKIVQLSTKDDIVVTQDYGLASLLVDKVLIVMHHNGKIYNSKNIQQLLDKRYINAQIRKQGGRHKGPPPFTKQDQKVFEQSLLKVIHRIKELD</sequence>
<protein>
    <recommendedName>
        <fullName evidence="1">UPF0178 protein SaurJH1_0721</fullName>
    </recommendedName>
</protein>
<accession>A6TZF9</accession>
<feature type="chain" id="PRO_1000081388" description="UPF0178 protein SaurJH1_0721">
    <location>
        <begin position="1"/>
        <end position="152"/>
    </location>
</feature>
<name>Y721_STAA2</name>
<gene>
    <name type="ordered locus">SaurJH1_0721</name>
</gene>
<organism>
    <name type="scientific">Staphylococcus aureus (strain JH1)</name>
    <dbReference type="NCBI Taxonomy" id="359787"/>
    <lineage>
        <taxon>Bacteria</taxon>
        <taxon>Bacillati</taxon>
        <taxon>Bacillota</taxon>
        <taxon>Bacilli</taxon>
        <taxon>Bacillales</taxon>
        <taxon>Staphylococcaceae</taxon>
        <taxon>Staphylococcus</taxon>
    </lineage>
</organism>
<proteinExistence type="inferred from homology"/>
<evidence type="ECO:0000255" key="1">
    <source>
        <dbReference type="HAMAP-Rule" id="MF_00489"/>
    </source>
</evidence>
<reference key="1">
    <citation type="submission" date="2007-06" db="EMBL/GenBank/DDBJ databases">
        <title>Complete sequence of chromosome of Staphylococcus aureus subsp. aureus JH1.</title>
        <authorList>
            <consortium name="US DOE Joint Genome Institute"/>
            <person name="Copeland A."/>
            <person name="Lucas S."/>
            <person name="Lapidus A."/>
            <person name="Barry K."/>
            <person name="Detter J.C."/>
            <person name="Glavina del Rio T."/>
            <person name="Hammon N."/>
            <person name="Israni S."/>
            <person name="Dalin E."/>
            <person name="Tice H."/>
            <person name="Pitluck S."/>
            <person name="Chain P."/>
            <person name="Malfatti S."/>
            <person name="Shin M."/>
            <person name="Vergez L."/>
            <person name="Schmutz J."/>
            <person name="Larimer F."/>
            <person name="Land M."/>
            <person name="Hauser L."/>
            <person name="Kyrpides N."/>
            <person name="Ivanova N."/>
            <person name="Tomasz A."/>
            <person name="Richardson P."/>
        </authorList>
    </citation>
    <scope>NUCLEOTIDE SEQUENCE [LARGE SCALE GENOMIC DNA]</scope>
    <source>
        <strain>JH1</strain>
    </source>
</reference>
<dbReference type="EMBL" id="CP000736">
    <property type="protein sequence ID" value="ABR51577.1"/>
    <property type="molecule type" value="Genomic_DNA"/>
</dbReference>
<dbReference type="SMR" id="A6TZF9"/>
<dbReference type="KEGG" id="sah:SaurJH1_0721"/>
<dbReference type="HOGENOM" id="CLU_106619_0_0_9"/>
<dbReference type="HAMAP" id="MF_00489">
    <property type="entry name" value="UPF0178"/>
    <property type="match status" value="1"/>
</dbReference>
<dbReference type="InterPro" id="IPR003791">
    <property type="entry name" value="UPF0178"/>
</dbReference>
<dbReference type="NCBIfam" id="NF001095">
    <property type="entry name" value="PRK00124.1"/>
    <property type="match status" value="1"/>
</dbReference>
<dbReference type="PANTHER" id="PTHR35146">
    <property type="entry name" value="UPF0178 PROTEIN YAII"/>
    <property type="match status" value="1"/>
</dbReference>
<dbReference type="PANTHER" id="PTHR35146:SF1">
    <property type="entry name" value="UPF0178 PROTEIN YAII"/>
    <property type="match status" value="1"/>
</dbReference>
<dbReference type="Pfam" id="PF02639">
    <property type="entry name" value="DUF188"/>
    <property type="match status" value="1"/>
</dbReference>